<proteinExistence type="inferred from homology"/>
<keyword id="KW-0240">DNA-directed RNA polymerase</keyword>
<keyword id="KW-0548">Nucleotidyltransferase</keyword>
<keyword id="KW-1185">Reference proteome</keyword>
<keyword id="KW-0804">Transcription</keyword>
<keyword id="KW-0808">Transferase</keyword>
<reference key="1">
    <citation type="journal article" date="2010" name="Appl. Environ. Microbiol.">
        <title>The genome sequence of Psychrobacter arcticus 273-4, a psychroactive Siberian permafrost bacterium, reveals mechanisms for adaptation to low-temperature growth.</title>
        <authorList>
            <person name="Ayala-del-Rio H.L."/>
            <person name="Chain P.S."/>
            <person name="Grzymski J.J."/>
            <person name="Ponder M.A."/>
            <person name="Ivanova N."/>
            <person name="Bergholz P.W."/>
            <person name="Di Bartolo G."/>
            <person name="Hauser L."/>
            <person name="Land M."/>
            <person name="Bakermans C."/>
            <person name="Rodrigues D."/>
            <person name="Klappenbach J."/>
            <person name="Zarka D."/>
            <person name="Larimer F."/>
            <person name="Richardson P."/>
            <person name="Murray A."/>
            <person name="Thomashow M."/>
            <person name="Tiedje J.M."/>
        </authorList>
    </citation>
    <scope>NUCLEOTIDE SEQUENCE [LARGE SCALE GENOMIC DNA]</scope>
    <source>
        <strain>DSM 17307 / VKM B-2377 / 273-4</strain>
    </source>
</reference>
<feature type="chain" id="PRO_0000225295" description="DNA-directed RNA polymerase subunit alpha">
    <location>
        <begin position="1"/>
        <end position="335"/>
    </location>
</feature>
<feature type="region of interest" description="Alpha N-terminal domain (alpha-NTD)" evidence="1">
    <location>
        <begin position="1"/>
        <end position="233"/>
    </location>
</feature>
<feature type="region of interest" description="Alpha C-terminal domain (alpha-CTD)" evidence="1">
    <location>
        <begin position="247"/>
        <end position="335"/>
    </location>
</feature>
<evidence type="ECO:0000255" key="1">
    <source>
        <dbReference type="HAMAP-Rule" id="MF_00059"/>
    </source>
</evidence>
<name>RPOA_PSYA2</name>
<organism>
    <name type="scientific">Psychrobacter arcticus (strain DSM 17307 / VKM B-2377 / 273-4)</name>
    <dbReference type="NCBI Taxonomy" id="259536"/>
    <lineage>
        <taxon>Bacteria</taxon>
        <taxon>Pseudomonadati</taxon>
        <taxon>Pseudomonadota</taxon>
        <taxon>Gammaproteobacteria</taxon>
        <taxon>Moraxellales</taxon>
        <taxon>Moraxellaceae</taxon>
        <taxon>Psychrobacter</taxon>
    </lineage>
</organism>
<accession>Q4FUD1</accession>
<gene>
    <name evidence="1" type="primary">rpoA</name>
    <name type="ordered locus">Psyc_0514</name>
</gene>
<comment type="function">
    <text evidence="1">DNA-dependent RNA polymerase catalyzes the transcription of DNA into RNA using the four ribonucleoside triphosphates as substrates.</text>
</comment>
<comment type="catalytic activity">
    <reaction evidence="1">
        <text>RNA(n) + a ribonucleoside 5'-triphosphate = RNA(n+1) + diphosphate</text>
        <dbReference type="Rhea" id="RHEA:21248"/>
        <dbReference type="Rhea" id="RHEA-COMP:14527"/>
        <dbReference type="Rhea" id="RHEA-COMP:17342"/>
        <dbReference type="ChEBI" id="CHEBI:33019"/>
        <dbReference type="ChEBI" id="CHEBI:61557"/>
        <dbReference type="ChEBI" id="CHEBI:140395"/>
        <dbReference type="EC" id="2.7.7.6"/>
    </reaction>
</comment>
<comment type="subunit">
    <text evidence="1">Homodimer. The RNAP catalytic core consists of 2 alpha, 1 beta, 1 beta' and 1 omega subunit. When a sigma factor is associated with the core the holoenzyme is formed, which can initiate transcription.</text>
</comment>
<comment type="domain">
    <text evidence="1">The N-terminal domain is essential for RNAP assembly and basal transcription, whereas the C-terminal domain is involved in interaction with transcriptional regulators and with upstream promoter elements.</text>
</comment>
<comment type="similarity">
    <text evidence="1">Belongs to the RNA polymerase alpha chain family.</text>
</comment>
<protein>
    <recommendedName>
        <fullName evidence="1">DNA-directed RNA polymerase subunit alpha</fullName>
        <shortName evidence="1">RNAP subunit alpha</shortName>
        <ecNumber evidence="1">2.7.7.6</ecNumber>
    </recommendedName>
    <alternativeName>
        <fullName evidence="1">RNA polymerase subunit alpha</fullName>
    </alternativeName>
    <alternativeName>
        <fullName evidence="1">Transcriptase subunit alpha</fullName>
    </alternativeName>
</protein>
<sequence length="335" mass="37373">MMLNATEFLTPNAINVDTVNETIAKVTLEPLERGFGHTLGNALRRILLSSLPGAAVIEAEIDGVDHEYSTLEGLQEDVLDLLLNLKGLAITLHDQNEVFLTLDKQGPGTITAADITLPHNVDIINPELVLGTLSDRGHLKMRLRVVMGRGYEPANQRREDGDTKAIGRLKLDASFSPVLRVAYQVENARVEQRTDLDRLIIELETNGTIDPEEAIRKAATILQQQISIFVDLEAEEAPEPVKEKEEVDPVLLRPVDDLELTVRSANCLKAENIYYIGDLVQRSETELLKTPNLGKKSLTEIKDVLASKDLELGMRLDNWPPADLRVDDRFSYRSR</sequence>
<dbReference type="EC" id="2.7.7.6" evidence="1"/>
<dbReference type="EMBL" id="CP000082">
    <property type="protein sequence ID" value="AAZ18377.1"/>
    <property type="molecule type" value="Genomic_DNA"/>
</dbReference>
<dbReference type="RefSeq" id="WP_011279808.1">
    <property type="nucleotide sequence ID" value="NC_007204.1"/>
</dbReference>
<dbReference type="SMR" id="Q4FUD1"/>
<dbReference type="STRING" id="259536.Psyc_0514"/>
<dbReference type="KEGG" id="par:Psyc_0514"/>
<dbReference type="eggNOG" id="COG0202">
    <property type="taxonomic scope" value="Bacteria"/>
</dbReference>
<dbReference type="HOGENOM" id="CLU_053084_0_0_6"/>
<dbReference type="OrthoDB" id="9805706at2"/>
<dbReference type="Proteomes" id="UP000000546">
    <property type="component" value="Chromosome"/>
</dbReference>
<dbReference type="GO" id="GO:0005737">
    <property type="term" value="C:cytoplasm"/>
    <property type="evidence" value="ECO:0007669"/>
    <property type="project" value="UniProtKB-ARBA"/>
</dbReference>
<dbReference type="GO" id="GO:0000428">
    <property type="term" value="C:DNA-directed RNA polymerase complex"/>
    <property type="evidence" value="ECO:0007669"/>
    <property type="project" value="UniProtKB-KW"/>
</dbReference>
<dbReference type="GO" id="GO:0003677">
    <property type="term" value="F:DNA binding"/>
    <property type="evidence" value="ECO:0007669"/>
    <property type="project" value="UniProtKB-UniRule"/>
</dbReference>
<dbReference type="GO" id="GO:0003899">
    <property type="term" value="F:DNA-directed RNA polymerase activity"/>
    <property type="evidence" value="ECO:0007669"/>
    <property type="project" value="UniProtKB-UniRule"/>
</dbReference>
<dbReference type="GO" id="GO:0046983">
    <property type="term" value="F:protein dimerization activity"/>
    <property type="evidence" value="ECO:0007669"/>
    <property type="project" value="InterPro"/>
</dbReference>
<dbReference type="GO" id="GO:0006351">
    <property type="term" value="P:DNA-templated transcription"/>
    <property type="evidence" value="ECO:0007669"/>
    <property type="project" value="UniProtKB-UniRule"/>
</dbReference>
<dbReference type="CDD" id="cd06928">
    <property type="entry name" value="RNAP_alpha_NTD"/>
    <property type="match status" value="1"/>
</dbReference>
<dbReference type="FunFam" id="1.10.150.20:FF:000001">
    <property type="entry name" value="DNA-directed RNA polymerase subunit alpha"/>
    <property type="match status" value="1"/>
</dbReference>
<dbReference type="FunFam" id="2.170.120.12:FF:000001">
    <property type="entry name" value="DNA-directed RNA polymerase subunit alpha"/>
    <property type="match status" value="1"/>
</dbReference>
<dbReference type="Gene3D" id="1.10.150.20">
    <property type="entry name" value="5' to 3' exonuclease, C-terminal subdomain"/>
    <property type="match status" value="1"/>
</dbReference>
<dbReference type="Gene3D" id="2.170.120.12">
    <property type="entry name" value="DNA-directed RNA polymerase, insert domain"/>
    <property type="match status" value="1"/>
</dbReference>
<dbReference type="Gene3D" id="3.30.1360.10">
    <property type="entry name" value="RNA polymerase, RBP11-like subunit"/>
    <property type="match status" value="1"/>
</dbReference>
<dbReference type="HAMAP" id="MF_00059">
    <property type="entry name" value="RNApol_bact_RpoA"/>
    <property type="match status" value="1"/>
</dbReference>
<dbReference type="InterPro" id="IPR011262">
    <property type="entry name" value="DNA-dir_RNA_pol_insert"/>
</dbReference>
<dbReference type="InterPro" id="IPR011263">
    <property type="entry name" value="DNA-dir_RNA_pol_RpoA/D/Rpb3"/>
</dbReference>
<dbReference type="InterPro" id="IPR011773">
    <property type="entry name" value="DNA-dir_RpoA"/>
</dbReference>
<dbReference type="InterPro" id="IPR036603">
    <property type="entry name" value="RBP11-like"/>
</dbReference>
<dbReference type="InterPro" id="IPR011260">
    <property type="entry name" value="RNAP_asu_C"/>
</dbReference>
<dbReference type="InterPro" id="IPR036643">
    <property type="entry name" value="RNApol_insert_sf"/>
</dbReference>
<dbReference type="NCBIfam" id="NF003513">
    <property type="entry name" value="PRK05182.1-2"/>
    <property type="match status" value="1"/>
</dbReference>
<dbReference type="NCBIfam" id="NF003519">
    <property type="entry name" value="PRK05182.2-5"/>
    <property type="match status" value="1"/>
</dbReference>
<dbReference type="NCBIfam" id="TIGR02027">
    <property type="entry name" value="rpoA"/>
    <property type="match status" value="1"/>
</dbReference>
<dbReference type="Pfam" id="PF01000">
    <property type="entry name" value="RNA_pol_A_bac"/>
    <property type="match status" value="1"/>
</dbReference>
<dbReference type="Pfam" id="PF03118">
    <property type="entry name" value="RNA_pol_A_CTD"/>
    <property type="match status" value="1"/>
</dbReference>
<dbReference type="Pfam" id="PF01193">
    <property type="entry name" value="RNA_pol_L"/>
    <property type="match status" value="1"/>
</dbReference>
<dbReference type="SMART" id="SM00662">
    <property type="entry name" value="RPOLD"/>
    <property type="match status" value="1"/>
</dbReference>
<dbReference type="SUPFAM" id="SSF47789">
    <property type="entry name" value="C-terminal domain of RNA polymerase alpha subunit"/>
    <property type="match status" value="1"/>
</dbReference>
<dbReference type="SUPFAM" id="SSF56553">
    <property type="entry name" value="Insert subdomain of RNA polymerase alpha subunit"/>
    <property type="match status" value="1"/>
</dbReference>
<dbReference type="SUPFAM" id="SSF55257">
    <property type="entry name" value="RBP11-like subunits of RNA polymerase"/>
    <property type="match status" value="1"/>
</dbReference>